<feature type="propeptide" id="PRO_0000009391" evidence="1">
    <location>
        <begin position="1"/>
        <end position="11"/>
    </location>
</feature>
<feature type="chain" id="PRO_0000009392" description="Flagellin B3">
    <location>
        <begin position="12"/>
        <end position="239"/>
    </location>
</feature>
<feature type="glycosylation site" description="N-linked (GlcNAc...) asparagine" evidence="2">
    <location>
        <position position="115"/>
    </location>
</feature>
<feature type="glycosylation site" description="N-linked (GlcNAc...) asparagine" evidence="2">
    <location>
        <position position="128"/>
    </location>
</feature>
<organism>
    <name type="scientific">Methanococcus voltae</name>
    <dbReference type="NCBI Taxonomy" id="2188"/>
    <lineage>
        <taxon>Archaea</taxon>
        <taxon>Methanobacteriati</taxon>
        <taxon>Methanobacteriota</taxon>
        <taxon>Methanomada group</taxon>
        <taxon>Methanococci</taxon>
        <taxon>Methanococcales</taxon>
        <taxon>Methanococcaceae</taxon>
        <taxon>Methanococcus</taxon>
    </lineage>
</organism>
<protein>
    <recommendedName>
        <fullName>Flagellin B3</fullName>
    </recommendedName>
</protein>
<accession>P27805</accession>
<gene>
    <name type="primary">flaB3</name>
</gene>
<dbReference type="EMBL" id="M72148">
    <property type="protein sequence ID" value="AAA73076.1"/>
    <property type="molecule type" value="Genomic_DNA"/>
</dbReference>
<dbReference type="PIR" id="D41316">
    <property type="entry name" value="D41316"/>
</dbReference>
<dbReference type="SMR" id="P27805"/>
<dbReference type="GlyCosmos" id="P27805">
    <property type="glycosylation" value="2 sites, No reported glycans"/>
</dbReference>
<dbReference type="iPTMnet" id="P27805"/>
<dbReference type="GO" id="GO:0097589">
    <property type="term" value="C:archaeal-type flagellum"/>
    <property type="evidence" value="ECO:0007669"/>
    <property type="project" value="UniProtKB-SubCell"/>
</dbReference>
<dbReference type="GO" id="GO:0005198">
    <property type="term" value="F:structural molecule activity"/>
    <property type="evidence" value="ECO:0007669"/>
    <property type="project" value="InterPro"/>
</dbReference>
<dbReference type="GO" id="GO:0097588">
    <property type="term" value="P:archaeal or bacterial-type flagellum-dependent cell motility"/>
    <property type="evidence" value="ECO:0007669"/>
    <property type="project" value="InterPro"/>
</dbReference>
<dbReference type="InterPro" id="IPR013373">
    <property type="entry name" value="Flagellin/pilin_N_arc"/>
</dbReference>
<dbReference type="InterPro" id="IPR002774">
    <property type="entry name" value="Flagellin_arc"/>
</dbReference>
<dbReference type="NCBIfam" id="TIGR02537">
    <property type="entry name" value="arch_flag_Nterm"/>
    <property type="match status" value="1"/>
</dbReference>
<dbReference type="NCBIfam" id="NF006325">
    <property type="entry name" value="PRK08541.1"/>
    <property type="match status" value="1"/>
</dbReference>
<dbReference type="PANTHER" id="PTHR35903">
    <property type="entry name" value="FLAGELLIN B1"/>
    <property type="match status" value="1"/>
</dbReference>
<dbReference type="PANTHER" id="PTHR35903:SF1">
    <property type="entry name" value="FLAGELLIN B1"/>
    <property type="match status" value="1"/>
</dbReference>
<dbReference type="Pfam" id="PF01917">
    <property type="entry name" value="Arch_flagellin"/>
    <property type="match status" value="1"/>
</dbReference>
<proteinExistence type="evidence at protein level"/>
<name>FLAB3_METVO</name>
<sequence>MLKNFMKNKKGAVGIGTLIIFIALVLVAAVAASVIINTAGKLQHKAAVVGQETTQQVASGLQVVKITGHSVDQYNLDKIAILVSPNIGDEIDLATTVVTFSTDDRKMSLLYDSSNASNGGKVRLSTANGTSDIFKYDDVYAIGAWPFEDPTYGQSDQDPNEKKFGIVVLQDMDNSVSGEHPTVNYGDKVLLAINIGNIVGENIGNRIRIQGEVVPEFGAPGIIDFTTPPVYANRVVALQ</sequence>
<reference key="1">
    <citation type="journal article" date="1991" name="J. Bacteriol.">
        <title>Cloning and sequencing of a multigene family encoding the flagellins of Methanococcus voltae.</title>
        <authorList>
            <person name="Kalmokoff M.L."/>
            <person name="Jarrell K.F."/>
        </authorList>
    </citation>
    <scope>NUCLEOTIDE SEQUENCE [GENOMIC DNA]</scope>
    <source>
        <strain>ATCC 33273 / DSM 1537 / NBRC 100457 / OCM 70 / PS</strain>
    </source>
</reference>
<reference key="2">
    <citation type="journal article" date="2005" name="J. Biol. Chem.">
        <title>Identification and characterization of the unique N-linked glycan common to the flagellins and S-layer glycoprotein of Methanococcus voltae.</title>
        <authorList>
            <person name="Voisin S."/>
            <person name="Houliston R.S."/>
            <person name="Kelly J."/>
            <person name="Brisson J.-R."/>
            <person name="Watson D."/>
            <person name="Bardy S.L."/>
            <person name="Jarrell K.F."/>
            <person name="Logan S.M."/>
        </authorList>
    </citation>
    <scope>GLYCOSYLATION AT ASN-115 AND ASN-128</scope>
    <scope>GLYCAN STRUCTURE</scope>
    <scope>IDENTIFICATION BY MASS SPECTROMETRY</scope>
    <source>
        <strain>ATCC 33273 / DSM 1537 / NBRC 100457 / OCM 70 / PS</strain>
    </source>
</reference>
<keyword id="KW-0974">Archaeal flagellum</keyword>
<keyword id="KW-0325">Glycoprotein</keyword>
<comment type="function">
    <text>Flagellin is the subunit protein which polymerizes to form the filaments of archaeal flagella.</text>
</comment>
<comment type="subcellular location">
    <subcellularLocation>
        <location>Archaeal flagellum</location>
    </subcellularLocation>
</comment>
<comment type="PTM">
    <text evidence="2">N-linked glycans consist of the 779 Da trisaccharide beta-ManNAc(Thr)-(1-4)-beta-GlcNAc3NAcA-(1-3)-beta-GlcNAc.</text>
</comment>
<comment type="similarity">
    <text evidence="3">Belongs to the archaeal flagellin family.</text>
</comment>
<evidence type="ECO:0000250" key="1"/>
<evidence type="ECO:0000269" key="2">
    <source>
    </source>
</evidence>
<evidence type="ECO:0000305" key="3"/>